<comment type="function">
    <text evidence="1">Cell wall formation.</text>
</comment>
<comment type="catalytic activity">
    <reaction evidence="1">
        <text>UDP-N-acetyl-alpha-D-muramate + NADP(+) = UDP-N-acetyl-3-O-(1-carboxyvinyl)-alpha-D-glucosamine + NADPH + H(+)</text>
        <dbReference type="Rhea" id="RHEA:12248"/>
        <dbReference type="ChEBI" id="CHEBI:15378"/>
        <dbReference type="ChEBI" id="CHEBI:57783"/>
        <dbReference type="ChEBI" id="CHEBI:58349"/>
        <dbReference type="ChEBI" id="CHEBI:68483"/>
        <dbReference type="ChEBI" id="CHEBI:70757"/>
        <dbReference type="EC" id="1.3.1.98"/>
    </reaction>
</comment>
<comment type="cofactor">
    <cofactor evidence="1">
        <name>FAD</name>
        <dbReference type="ChEBI" id="CHEBI:57692"/>
    </cofactor>
</comment>
<comment type="pathway">
    <text evidence="1">Cell wall biogenesis; peptidoglycan biosynthesis.</text>
</comment>
<comment type="subcellular location">
    <subcellularLocation>
        <location evidence="1">Cytoplasm</location>
    </subcellularLocation>
</comment>
<comment type="similarity">
    <text evidence="1">Belongs to the MurB family.</text>
</comment>
<organism>
    <name type="scientific">Burkholderia lata (strain ATCC 17760 / DSM 23089 / LMG 22485 / NCIMB 9086 / R18194 / 383)</name>
    <dbReference type="NCBI Taxonomy" id="482957"/>
    <lineage>
        <taxon>Bacteria</taxon>
        <taxon>Pseudomonadati</taxon>
        <taxon>Pseudomonadota</taxon>
        <taxon>Betaproteobacteria</taxon>
        <taxon>Burkholderiales</taxon>
        <taxon>Burkholderiaceae</taxon>
        <taxon>Burkholderia</taxon>
        <taxon>Burkholderia cepacia complex</taxon>
    </lineage>
</organism>
<name>MURB_BURL3</name>
<proteinExistence type="inferred from homology"/>
<feature type="chain" id="PRO_0000224673" description="UDP-N-acetylenolpyruvoylglucosamine reductase">
    <location>
        <begin position="1"/>
        <end position="349"/>
    </location>
</feature>
<feature type="domain" description="FAD-binding PCMH-type" evidence="1">
    <location>
        <begin position="24"/>
        <end position="197"/>
    </location>
</feature>
<feature type="active site" evidence="1">
    <location>
        <position position="173"/>
    </location>
</feature>
<feature type="active site" description="Proton donor" evidence="1">
    <location>
        <position position="249"/>
    </location>
</feature>
<feature type="active site" evidence="1">
    <location>
        <position position="345"/>
    </location>
</feature>
<gene>
    <name evidence="1" type="primary">murB</name>
    <name type="ordered locus">Bcep18194_A5886</name>
</gene>
<reference key="1">
    <citation type="submission" date="2005-10" db="EMBL/GenBank/DDBJ databases">
        <title>Complete sequence of chromosome 1 of Burkholderia sp. 383.</title>
        <authorList>
            <consortium name="US DOE Joint Genome Institute"/>
            <person name="Copeland A."/>
            <person name="Lucas S."/>
            <person name="Lapidus A."/>
            <person name="Barry K."/>
            <person name="Detter J.C."/>
            <person name="Glavina T."/>
            <person name="Hammon N."/>
            <person name="Israni S."/>
            <person name="Pitluck S."/>
            <person name="Chain P."/>
            <person name="Malfatti S."/>
            <person name="Shin M."/>
            <person name="Vergez L."/>
            <person name="Schmutz J."/>
            <person name="Larimer F."/>
            <person name="Land M."/>
            <person name="Kyrpides N."/>
            <person name="Lykidis A."/>
            <person name="Richardson P."/>
        </authorList>
    </citation>
    <scope>NUCLEOTIDE SEQUENCE [LARGE SCALE GENOMIC DNA]</scope>
    <source>
        <strain>ATCC 17760 / DSM 23089 / LMG 22485 / NCIMB 9086 / R18194 / 383</strain>
    </source>
</reference>
<sequence>MPMPLDDSTLSLLPDHPLAAHNTFGIAATARFAARITHASQFEALHRDPRVAHLPQLVLGGGSNVVFTRDFDGVVLLDEIAGRRVVREDDDAWYVEAGGGENWHAFVAWTLEHGMAGLENLALIPGTVGAAPIQNIGAYGLEMKAYFDSLVAVELATGCSERFDAARCAFGYRDSFFKREGRGRFAIVSVTFRLPKQWVPRLGYADVTRELDARGIAPDAATARDVFDAVVAIRRAKLPDPLVLGNAGSFFKNPVIDAAQFDALRARAPEVVSYPQPDGQVKLAAGWLIDRCGWKGRALGAAAVHDRQALVLVNRGGATGADVLALARAIQADVQTQFGVELEAEPVCL</sequence>
<protein>
    <recommendedName>
        <fullName evidence="1">UDP-N-acetylenolpyruvoylglucosamine reductase</fullName>
        <ecNumber evidence="1">1.3.1.98</ecNumber>
    </recommendedName>
    <alternativeName>
        <fullName evidence="1">UDP-N-acetylmuramate dehydrogenase</fullName>
    </alternativeName>
</protein>
<accession>Q39DI6</accession>
<dbReference type="EC" id="1.3.1.98" evidence="1"/>
<dbReference type="EMBL" id="CP000151">
    <property type="protein sequence ID" value="ABB09480.1"/>
    <property type="molecule type" value="Genomic_DNA"/>
</dbReference>
<dbReference type="RefSeq" id="WP_011352997.1">
    <property type="nucleotide sequence ID" value="NC_007510.1"/>
</dbReference>
<dbReference type="SMR" id="Q39DI6"/>
<dbReference type="GeneID" id="45095769"/>
<dbReference type="KEGG" id="bur:Bcep18194_A5886"/>
<dbReference type="PATRIC" id="fig|482957.22.peg.2877"/>
<dbReference type="HOGENOM" id="CLU_035304_0_0_4"/>
<dbReference type="UniPathway" id="UPA00219"/>
<dbReference type="Proteomes" id="UP000002705">
    <property type="component" value="Chromosome 1"/>
</dbReference>
<dbReference type="GO" id="GO:0005829">
    <property type="term" value="C:cytosol"/>
    <property type="evidence" value="ECO:0007669"/>
    <property type="project" value="TreeGrafter"/>
</dbReference>
<dbReference type="GO" id="GO:0071949">
    <property type="term" value="F:FAD binding"/>
    <property type="evidence" value="ECO:0007669"/>
    <property type="project" value="InterPro"/>
</dbReference>
<dbReference type="GO" id="GO:0008762">
    <property type="term" value="F:UDP-N-acetylmuramate dehydrogenase activity"/>
    <property type="evidence" value="ECO:0007669"/>
    <property type="project" value="UniProtKB-UniRule"/>
</dbReference>
<dbReference type="GO" id="GO:0051301">
    <property type="term" value="P:cell division"/>
    <property type="evidence" value="ECO:0007669"/>
    <property type="project" value="UniProtKB-KW"/>
</dbReference>
<dbReference type="GO" id="GO:0071555">
    <property type="term" value="P:cell wall organization"/>
    <property type="evidence" value="ECO:0007669"/>
    <property type="project" value="UniProtKB-KW"/>
</dbReference>
<dbReference type="GO" id="GO:0009252">
    <property type="term" value="P:peptidoglycan biosynthetic process"/>
    <property type="evidence" value="ECO:0007669"/>
    <property type="project" value="UniProtKB-UniRule"/>
</dbReference>
<dbReference type="GO" id="GO:0008360">
    <property type="term" value="P:regulation of cell shape"/>
    <property type="evidence" value="ECO:0007669"/>
    <property type="project" value="UniProtKB-KW"/>
</dbReference>
<dbReference type="Gene3D" id="3.30.465.10">
    <property type="match status" value="1"/>
</dbReference>
<dbReference type="Gene3D" id="3.90.78.10">
    <property type="entry name" value="UDP-N-acetylenolpyruvoylglucosamine reductase, C-terminal domain"/>
    <property type="match status" value="1"/>
</dbReference>
<dbReference type="Gene3D" id="3.30.43.10">
    <property type="entry name" value="Uridine Diphospho-n-acetylenolpyruvylglucosamine Reductase, domain 2"/>
    <property type="match status" value="1"/>
</dbReference>
<dbReference type="HAMAP" id="MF_00037">
    <property type="entry name" value="MurB"/>
    <property type="match status" value="1"/>
</dbReference>
<dbReference type="InterPro" id="IPR016166">
    <property type="entry name" value="FAD-bd_PCMH"/>
</dbReference>
<dbReference type="InterPro" id="IPR036318">
    <property type="entry name" value="FAD-bd_PCMH-like_sf"/>
</dbReference>
<dbReference type="InterPro" id="IPR016167">
    <property type="entry name" value="FAD-bd_PCMH_sub1"/>
</dbReference>
<dbReference type="InterPro" id="IPR016169">
    <property type="entry name" value="FAD-bd_PCMH_sub2"/>
</dbReference>
<dbReference type="InterPro" id="IPR003170">
    <property type="entry name" value="MurB"/>
</dbReference>
<dbReference type="InterPro" id="IPR011601">
    <property type="entry name" value="MurB_C"/>
</dbReference>
<dbReference type="InterPro" id="IPR036635">
    <property type="entry name" value="MurB_C_sf"/>
</dbReference>
<dbReference type="InterPro" id="IPR006094">
    <property type="entry name" value="Oxid_FAD_bind_N"/>
</dbReference>
<dbReference type="NCBIfam" id="TIGR00179">
    <property type="entry name" value="murB"/>
    <property type="match status" value="1"/>
</dbReference>
<dbReference type="NCBIfam" id="NF000755">
    <property type="entry name" value="PRK00046.1"/>
    <property type="match status" value="1"/>
</dbReference>
<dbReference type="NCBIfam" id="NF010478">
    <property type="entry name" value="PRK13903.1"/>
    <property type="match status" value="1"/>
</dbReference>
<dbReference type="PANTHER" id="PTHR21071">
    <property type="entry name" value="UDP-N-ACETYLENOLPYRUVOYLGLUCOSAMINE REDUCTASE"/>
    <property type="match status" value="1"/>
</dbReference>
<dbReference type="PANTHER" id="PTHR21071:SF4">
    <property type="entry name" value="UDP-N-ACETYLENOLPYRUVOYLGLUCOSAMINE REDUCTASE"/>
    <property type="match status" value="1"/>
</dbReference>
<dbReference type="Pfam" id="PF01565">
    <property type="entry name" value="FAD_binding_4"/>
    <property type="match status" value="1"/>
</dbReference>
<dbReference type="Pfam" id="PF02873">
    <property type="entry name" value="MurB_C"/>
    <property type="match status" value="1"/>
</dbReference>
<dbReference type="SUPFAM" id="SSF56176">
    <property type="entry name" value="FAD-binding/transporter-associated domain-like"/>
    <property type="match status" value="1"/>
</dbReference>
<dbReference type="SUPFAM" id="SSF56194">
    <property type="entry name" value="Uridine diphospho-N-Acetylenolpyruvylglucosamine reductase, MurB, C-terminal domain"/>
    <property type="match status" value="1"/>
</dbReference>
<dbReference type="PROSITE" id="PS51387">
    <property type="entry name" value="FAD_PCMH"/>
    <property type="match status" value="1"/>
</dbReference>
<keyword id="KW-0131">Cell cycle</keyword>
<keyword id="KW-0132">Cell division</keyword>
<keyword id="KW-0133">Cell shape</keyword>
<keyword id="KW-0961">Cell wall biogenesis/degradation</keyword>
<keyword id="KW-0963">Cytoplasm</keyword>
<keyword id="KW-0274">FAD</keyword>
<keyword id="KW-0285">Flavoprotein</keyword>
<keyword id="KW-0521">NADP</keyword>
<keyword id="KW-0560">Oxidoreductase</keyword>
<keyword id="KW-0573">Peptidoglycan synthesis</keyword>
<evidence type="ECO:0000255" key="1">
    <source>
        <dbReference type="HAMAP-Rule" id="MF_00037"/>
    </source>
</evidence>